<evidence type="ECO:0000255" key="1">
    <source>
        <dbReference type="HAMAP-Rule" id="MF_01459"/>
    </source>
</evidence>
<name>CPXS4_TRIEI</name>
<organism>
    <name type="scientific">Trichodesmium erythraeum (strain IMS101)</name>
    <dbReference type="NCBI Taxonomy" id="203124"/>
    <lineage>
        <taxon>Bacteria</taxon>
        <taxon>Bacillati</taxon>
        <taxon>Cyanobacteriota</taxon>
        <taxon>Cyanophyceae</taxon>
        <taxon>Oscillatoriophycideae</taxon>
        <taxon>Oscillatoriales</taxon>
        <taxon>Microcoleaceae</taxon>
        <taxon>Trichodesmium</taxon>
    </lineage>
</organism>
<sequence length="193" mass="22211">MKLKPPMTMMDFFLKSEGTWFSQRTVHHFDSAQDESGKSNILVKVLTKDDPKVIKVCEQQKVNPALAKGGASFNWQDNLDHGEPNPNYSAILVDIPDSQTGRTGKFLRNRGYIESIPVVSRYHFTNDGVLTIDTEYEKNQGQERCWFLTDDFRVRINTVRMMNGVNLMAYCSERRCITRKQLEEIVQKNAARS</sequence>
<reference key="1">
    <citation type="journal article" date="2015" name="Proc. Natl. Acad. Sci. U.S.A.">
        <title>Trichodesmium genome maintains abundant, widespread noncoding DNA in situ, despite oligotrophic lifestyle.</title>
        <authorList>
            <person name="Walworth N."/>
            <person name="Pfreundt U."/>
            <person name="Nelson W.C."/>
            <person name="Mincer T."/>
            <person name="Heidelberg J.F."/>
            <person name="Fu F."/>
            <person name="Waterbury J.B."/>
            <person name="Glavina del Rio T."/>
            <person name="Goodwin L."/>
            <person name="Kyrpides N.C."/>
            <person name="Land M.L."/>
            <person name="Woyke T."/>
            <person name="Hutchins D.A."/>
            <person name="Hess W.R."/>
            <person name="Webb E.A."/>
        </authorList>
    </citation>
    <scope>NUCLEOTIDE SEQUENCE [LARGE SCALE GENOMIC DNA]</scope>
    <source>
        <strain>IMS101</strain>
    </source>
</reference>
<dbReference type="EC" id="4.-.-.-" evidence="1"/>
<dbReference type="EMBL" id="CP000393">
    <property type="protein sequence ID" value="ABG53119.1"/>
    <property type="molecule type" value="Genomic_DNA"/>
</dbReference>
<dbReference type="RefSeq" id="WP_011613449.1">
    <property type="nucleotide sequence ID" value="NC_008312.1"/>
</dbReference>
<dbReference type="SMR" id="Q10XA5"/>
<dbReference type="STRING" id="203124.Tery_4111"/>
<dbReference type="KEGG" id="ter:Tery_4111"/>
<dbReference type="eggNOG" id="ENOG502Z7Z4">
    <property type="taxonomic scope" value="Bacteria"/>
</dbReference>
<dbReference type="HOGENOM" id="CLU_096258_0_0_3"/>
<dbReference type="OrthoDB" id="554080at2"/>
<dbReference type="GO" id="GO:0016829">
    <property type="term" value="F:lyase activity"/>
    <property type="evidence" value="ECO:0007669"/>
    <property type="project" value="UniProtKB-KW"/>
</dbReference>
<dbReference type="CDD" id="cd19433">
    <property type="entry name" value="lipocalin_CpcS-CpeS"/>
    <property type="match status" value="1"/>
</dbReference>
<dbReference type="Gene3D" id="2.40.128.20">
    <property type="match status" value="1"/>
</dbReference>
<dbReference type="HAMAP" id="MF_01459">
    <property type="entry name" value="Chrphore_lyase_CpxS"/>
    <property type="match status" value="1"/>
</dbReference>
<dbReference type="InterPro" id="IPR012674">
    <property type="entry name" value="Calycin"/>
</dbReference>
<dbReference type="InterPro" id="IPR018536">
    <property type="entry name" value="CpcS/CpeS"/>
</dbReference>
<dbReference type="Pfam" id="PF09367">
    <property type="entry name" value="CpeS"/>
    <property type="match status" value="1"/>
</dbReference>
<keyword id="KW-0456">Lyase</keyword>
<protein>
    <recommendedName>
        <fullName evidence="1">Chromophore lyase CpcS/CpeS 4</fullName>
        <ecNumber evidence="1">4.-.-.-</ecNumber>
    </recommendedName>
</protein>
<gene>
    <name evidence="1" type="primary">cpcS4</name>
    <name type="ordered locus">Tery_4111</name>
</gene>
<accession>Q10XA5</accession>
<proteinExistence type="inferred from homology"/>
<comment type="function">
    <text evidence="1">Covalently attaches a chromophore to Cys residue(s) of phycobiliproteins.</text>
</comment>
<comment type="similarity">
    <text evidence="1">Belongs to the CpcS/CpeS biliprotein lyase family.</text>
</comment>
<feature type="chain" id="PRO_0000403149" description="Chromophore lyase CpcS/CpeS 4">
    <location>
        <begin position="1"/>
        <end position="193"/>
    </location>
</feature>